<accession>Q6G5J7</accession>
<evidence type="ECO:0000255" key="1">
    <source>
        <dbReference type="HAMAP-Rule" id="MF_00195"/>
    </source>
</evidence>
<reference key="1">
    <citation type="journal article" date="2004" name="Proc. Natl. Acad. Sci. U.S.A.">
        <title>The louse-borne human pathogen Bartonella quintana is a genomic derivative of the zoonotic agent Bartonella henselae.</title>
        <authorList>
            <person name="Alsmark U.C.M."/>
            <person name="Frank A.C."/>
            <person name="Karlberg E.O."/>
            <person name="Legault B.-A."/>
            <person name="Ardell D.H."/>
            <person name="Canbaeck B."/>
            <person name="Eriksson A.-S."/>
            <person name="Naeslund A.K."/>
            <person name="Handley S.A."/>
            <person name="Huvet M."/>
            <person name="La Scola B."/>
            <person name="Holmberg M."/>
            <person name="Andersson S.G.E."/>
        </authorList>
    </citation>
    <scope>NUCLEOTIDE SEQUENCE [LARGE SCALE GENOMIC DNA]</scope>
    <source>
        <strain>ATCC 49882 / DSM 28221 / CCUG 30454 / Houston 1</strain>
    </source>
</reference>
<comment type="function">
    <text evidence="1">GTPase that plays an essential role in the late steps of ribosome biogenesis.</text>
</comment>
<comment type="subunit">
    <text evidence="1">Associates with the 50S ribosomal subunit.</text>
</comment>
<comment type="similarity">
    <text evidence="1">Belongs to the TRAFAC class TrmE-Era-EngA-EngB-Septin-like GTPase superfamily. EngA (Der) GTPase family.</text>
</comment>
<dbReference type="EMBL" id="BX897699">
    <property type="protein sequence ID" value="CAF27217.1"/>
    <property type="molecule type" value="Genomic_DNA"/>
</dbReference>
<dbReference type="RefSeq" id="WP_011180344.1">
    <property type="nucleotide sequence ID" value="NZ_LRIJ02000001.1"/>
</dbReference>
<dbReference type="SMR" id="Q6G5J7"/>
<dbReference type="PaxDb" id="283166-BH04080"/>
<dbReference type="EnsemblBacteria" id="CAF27217">
    <property type="protein sequence ID" value="CAF27217"/>
    <property type="gene ID" value="BH04080"/>
</dbReference>
<dbReference type="GeneID" id="92985066"/>
<dbReference type="KEGG" id="bhe:BH04080"/>
<dbReference type="eggNOG" id="COG1160">
    <property type="taxonomic scope" value="Bacteria"/>
</dbReference>
<dbReference type="OrthoDB" id="9805918at2"/>
<dbReference type="Proteomes" id="UP000000421">
    <property type="component" value="Chromosome"/>
</dbReference>
<dbReference type="GO" id="GO:0005525">
    <property type="term" value="F:GTP binding"/>
    <property type="evidence" value="ECO:0007669"/>
    <property type="project" value="UniProtKB-UniRule"/>
</dbReference>
<dbReference type="GO" id="GO:0042254">
    <property type="term" value="P:ribosome biogenesis"/>
    <property type="evidence" value="ECO:0007669"/>
    <property type="project" value="UniProtKB-KW"/>
</dbReference>
<dbReference type="CDD" id="cd01894">
    <property type="entry name" value="EngA1"/>
    <property type="match status" value="1"/>
</dbReference>
<dbReference type="CDD" id="cd01895">
    <property type="entry name" value="EngA2"/>
    <property type="match status" value="1"/>
</dbReference>
<dbReference type="FunFam" id="3.30.300.20:FF:000004">
    <property type="entry name" value="GTPase Der"/>
    <property type="match status" value="1"/>
</dbReference>
<dbReference type="FunFam" id="3.40.50.300:FF:000057">
    <property type="entry name" value="GTPase Der"/>
    <property type="match status" value="1"/>
</dbReference>
<dbReference type="Gene3D" id="3.30.300.20">
    <property type="match status" value="1"/>
</dbReference>
<dbReference type="Gene3D" id="3.40.50.300">
    <property type="entry name" value="P-loop containing nucleotide triphosphate hydrolases"/>
    <property type="match status" value="2"/>
</dbReference>
<dbReference type="HAMAP" id="MF_00195">
    <property type="entry name" value="GTPase_Der"/>
    <property type="match status" value="1"/>
</dbReference>
<dbReference type="InterPro" id="IPR031166">
    <property type="entry name" value="G_ENGA"/>
</dbReference>
<dbReference type="InterPro" id="IPR006073">
    <property type="entry name" value="GTP-bd"/>
</dbReference>
<dbReference type="InterPro" id="IPR016484">
    <property type="entry name" value="GTPase_Der"/>
</dbReference>
<dbReference type="InterPro" id="IPR032859">
    <property type="entry name" value="KH_dom-like"/>
</dbReference>
<dbReference type="InterPro" id="IPR015946">
    <property type="entry name" value="KH_dom-like_a/b"/>
</dbReference>
<dbReference type="InterPro" id="IPR027417">
    <property type="entry name" value="P-loop_NTPase"/>
</dbReference>
<dbReference type="InterPro" id="IPR005225">
    <property type="entry name" value="Small_GTP-bd"/>
</dbReference>
<dbReference type="NCBIfam" id="TIGR03594">
    <property type="entry name" value="GTPase_EngA"/>
    <property type="match status" value="1"/>
</dbReference>
<dbReference type="NCBIfam" id="TIGR00231">
    <property type="entry name" value="small_GTP"/>
    <property type="match status" value="2"/>
</dbReference>
<dbReference type="PANTHER" id="PTHR43834">
    <property type="entry name" value="GTPASE DER"/>
    <property type="match status" value="1"/>
</dbReference>
<dbReference type="PANTHER" id="PTHR43834:SF6">
    <property type="entry name" value="GTPASE DER"/>
    <property type="match status" value="1"/>
</dbReference>
<dbReference type="Pfam" id="PF14714">
    <property type="entry name" value="KH_dom-like"/>
    <property type="match status" value="1"/>
</dbReference>
<dbReference type="Pfam" id="PF01926">
    <property type="entry name" value="MMR_HSR1"/>
    <property type="match status" value="2"/>
</dbReference>
<dbReference type="PIRSF" id="PIRSF006485">
    <property type="entry name" value="GTP-binding_EngA"/>
    <property type="match status" value="1"/>
</dbReference>
<dbReference type="SUPFAM" id="SSF52540">
    <property type="entry name" value="P-loop containing nucleoside triphosphate hydrolases"/>
    <property type="match status" value="2"/>
</dbReference>
<dbReference type="PROSITE" id="PS51712">
    <property type="entry name" value="G_ENGA"/>
    <property type="match status" value="2"/>
</dbReference>
<organism>
    <name type="scientific">Bartonella henselae (strain ATCC 49882 / DSM 28221 / CCUG 30454 / Houston 1)</name>
    <name type="common">Rochalimaea henselae</name>
    <dbReference type="NCBI Taxonomy" id="283166"/>
    <lineage>
        <taxon>Bacteria</taxon>
        <taxon>Pseudomonadati</taxon>
        <taxon>Pseudomonadota</taxon>
        <taxon>Alphaproteobacteria</taxon>
        <taxon>Hyphomicrobiales</taxon>
        <taxon>Bartonellaceae</taxon>
        <taxon>Bartonella</taxon>
    </lineage>
</organism>
<proteinExistence type="inferred from homology"/>
<sequence>MSLTIAIVGRPNVGKSTLFNRLVGQKLALVDDKPGVTRDRRVHAATLQDLRFDVIDTAGLEETGDHTLEGRMRAHTKAAIDEADLILFVFDAKSGITPSDLNFASLVRKSGKPIVLVANKSESKAAIGGEYEAWSLGLGEPCSISAEHGLGLSDLRDAIMKASGGERIFASKNQEEHIALQSASLDDYIDNLEEKGDVYDKSKPLRIAVAGRPNTGKSTLINRMLGQDRLLTGPEAGLTRDSISVDWEWRGRHIKLFDTAGLRRKSKIQEKLEKLSVADTLRAIRFAEVVVIVFDATTPFEKQDLQIADLVIREGRVPLIAFNKWDLIENSQATLVDLHEKCIRLLPQVRGLRAVPLSGQYGQGIDKLMENVMMMHRVWNRRISTGKLNRWLETIVAHHPPPAVLGRRLKVKYVTQVKTRPPGFVFSCSRPKLMPQSYLRYLSNELRNTFDMPGIPIRISLRASDNPFATRSKKK</sequence>
<feature type="chain" id="PRO_1000011568" description="GTPase Der">
    <location>
        <begin position="1"/>
        <end position="475"/>
    </location>
</feature>
<feature type="domain" description="EngA-type G 1">
    <location>
        <begin position="3"/>
        <end position="167"/>
    </location>
</feature>
<feature type="domain" description="EngA-type G 2">
    <location>
        <begin position="205"/>
        <end position="380"/>
    </location>
</feature>
<feature type="domain" description="KH-like" evidence="1">
    <location>
        <begin position="381"/>
        <end position="465"/>
    </location>
</feature>
<feature type="binding site" evidence="1">
    <location>
        <begin position="9"/>
        <end position="16"/>
    </location>
    <ligand>
        <name>GTP</name>
        <dbReference type="ChEBI" id="CHEBI:37565"/>
        <label>1</label>
    </ligand>
</feature>
<feature type="binding site" evidence="1">
    <location>
        <begin position="56"/>
        <end position="60"/>
    </location>
    <ligand>
        <name>GTP</name>
        <dbReference type="ChEBI" id="CHEBI:37565"/>
        <label>1</label>
    </ligand>
</feature>
<feature type="binding site" evidence="1">
    <location>
        <begin position="119"/>
        <end position="122"/>
    </location>
    <ligand>
        <name>GTP</name>
        <dbReference type="ChEBI" id="CHEBI:37565"/>
        <label>1</label>
    </ligand>
</feature>
<feature type="binding site" evidence="1">
    <location>
        <begin position="211"/>
        <end position="218"/>
    </location>
    <ligand>
        <name>GTP</name>
        <dbReference type="ChEBI" id="CHEBI:37565"/>
        <label>2</label>
    </ligand>
</feature>
<feature type="binding site" evidence="1">
    <location>
        <begin position="258"/>
        <end position="262"/>
    </location>
    <ligand>
        <name>GTP</name>
        <dbReference type="ChEBI" id="CHEBI:37565"/>
        <label>2</label>
    </ligand>
</feature>
<feature type="binding site" evidence="1">
    <location>
        <begin position="323"/>
        <end position="326"/>
    </location>
    <ligand>
        <name>GTP</name>
        <dbReference type="ChEBI" id="CHEBI:37565"/>
        <label>2</label>
    </ligand>
</feature>
<name>DER_BARHE</name>
<keyword id="KW-0342">GTP-binding</keyword>
<keyword id="KW-0547">Nucleotide-binding</keyword>
<keyword id="KW-0677">Repeat</keyword>
<keyword id="KW-0690">Ribosome biogenesis</keyword>
<protein>
    <recommendedName>
        <fullName evidence="1">GTPase Der</fullName>
    </recommendedName>
    <alternativeName>
        <fullName evidence="1">GTP-binding protein EngA</fullName>
    </alternativeName>
</protein>
<gene>
    <name evidence="1" type="primary">der</name>
    <name type="synonym">engA</name>
    <name type="ordered locus">BH04080</name>
</gene>